<comment type="function">
    <text evidence="1">Involved in resistance toward heavy metals.</text>
</comment>
<comment type="cofactor">
    <cofactor evidence="1">
        <name>Cu cation</name>
        <dbReference type="ChEBI" id="CHEBI:23378"/>
    </cofactor>
    <text evidence="1">Binds 1 copper ion per subunit.</text>
</comment>
<comment type="subunit">
    <text evidence="1">Homotrimer.</text>
</comment>
<comment type="subcellular location">
    <subcellularLocation>
        <location evidence="1">Cytoplasm</location>
    </subcellularLocation>
</comment>
<comment type="similarity">
    <text evidence="1">Belongs to the CutA family.</text>
</comment>
<keyword id="KW-0186">Copper</keyword>
<keyword id="KW-0963">Cytoplasm</keyword>
<keyword id="KW-0479">Metal-binding</keyword>
<accession>B5FRJ6</accession>
<reference key="1">
    <citation type="journal article" date="2011" name="J. Bacteriol.">
        <title>Comparative genomics of 28 Salmonella enterica isolates: evidence for CRISPR-mediated adaptive sublineage evolution.</title>
        <authorList>
            <person name="Fricke W.F."/>
            <person name="Mammel M.K."/>
            <person name="McDermott P.F."/>
            <person name="Tartera C."/>
            <person name="White D.G."/>
            <person name="Leclerc J.E."/>
            <person name="Ravel J."/>
            <person name="Cebula T.A."/>
        </authorList>
    </citation>
    <scope>NUCLEOTIDE SEQUENCE [LARGE SCALE GENOMIC DNA]</scope>
    <source>
        <strain>CT_02021853</strain>
    </source>
</reference>
<gene>
    <name evidence="1" type="primary">cutA</name>
    <name type="ordered locus">SeD_A4720</name>
</gene>
<feature type="chain" id="PRO_1000137848" description="Divalent-cation tolerance protein CutA">
    <location>
        <begin position="1"/>
        <end position="115"/>
    </location>
</feature>
<feature type="binding site" evidence="1">
    <location>
        <position position="19"/>
    </location>
    <ligand>
        <name>Cu cation</name>
        <dbReference type="ChEBI" id="CHEBI:23378"/>
    </ligand>
</feature>
<feature type="binding site" evidence="1">
    <location>
        <position position="86"/>
    </location>
    <ligand>
        <name>Cu cation</name>
        <dbReference type="ChEBI" id="CHEBI:23378"/>
    </ligand>
</feature>
<feature type="binding site" evidence="1">
    <location>
        <position position="87"/>
    </location>
    <ligand>
        <name>Cu cation</name>
        <dbReference type="ChEBI" id="CHEBI:23378"/>
    </ligand>
</feature>
<proteinExistence type="inferred from homology"/>
<evidence type="ECO:0000255" key="1">
    <source>
        <dbReference type="HAMAP-Rule" id="MF_01160"/>
    </source>
</evidence>
<name>CUTA_SALDC</name>
<dbReference type="EMBL" id="CP001144">
    <property type="protein sequence ID" value="ACH75977.1"/>
    <property type="molecule type" value="Genomic_DNA"/>
</dbReference>
<dbReference type="RefSeq" id="WP_000887832.1">
    <property type="nucleotide sequence ID" value="NC_011205.1"/>
</dbReference>
<dbReference type="SMR" id="B5FRJ6"/>
<dbReference type="GeneID" id="66758552"/>
<dbReference type="KEGG" id="sed:SeD_A4720"/>
<dbReference type="HOGENOM" id="CLU_098807_3_0_6"/>
<dbReference type="Proteomes" id="UP000008322">
    <property type="component" value="Chromosome"/>
</dbReference>
<dbReference type="GO" id="GO:0005737">
    <property type="term" value="C:cytoplasm"/>
    <property type="evidence" value="ECO:0007669"/>
    <property type="project" value="UniProtKB-SubCell"/>
</dbReference>
<dbReference type="GO" id="GO:0005507">
    <property type="term" value="F:copper ion binding"/>
    <property type="evidence" value="ECO:0007669"/>
    <property type="project" value="UniProtKB-UniRule"/>
</dbReference>
<dbReference type="GO" id="GO:0010038">
    <property type="term" value="P:response to metal ion"/>
    <property type="evidence" value="ECO:0007669"/>
    <property type="project" value="InterPro"/>
</dbReference>
<dbReference type="FunFam" id="3.30.70.120:FF:000004">
    <property type="entry name" value="Divalent-cation tolerance protein CutA"/>
    <property type="match status" value="1"/>
</dbReference>
<dbReference type="Gene3D" id="3.30.70.120">
    <property type="match status" value="1"/>
</dbReference>
<dbReference type="HAMAP" id="MF_01160">
    <property type="entry name" value="CutA"/>
    <property type="match status" value="1"/>
</dbReference>
<dbReference type="InterPro" id="IPR023700">
    <property type="entry name" value="CutA_Enterobact"/>
</dbReference>
<dbReference type="InterPro" id="IPR004323">
    <property type="entry name" value="Ion_tolerance_CutA"/>
</dbReference>
<dbReference type="InterPro" id="IPR011322">
    <property type="entry name" value="N-reg_PII-like_a/b"/>
</dbReference>
<dbReference type="InterPro" id="IPR015867">
    <property type="entry name" value="N-reg_PII/ATP_PRibTrfase_C"/>
</dbReference>
<dbReference type="NCBIfam" id="NF007930">
    <property type="entry name" value="PRK10645.1"/>
    <property type="match status" value="1"/>
</dbReference>
<dbReference type="PANTHER" id="PTHR23419">
    <property type="entry name" value="DIVALENT CATION TOLERANCE CUTA-RELATED"/>
    <property type="match status" value="1"/>
</dbReference>
<dbReference type="PANTHER" id="PTHR23419:SF8">
    <property type="entry name" value="FI09726P"/>
    <property type="match status" value="1"/>
</dbReference>
<dbReference type="Pfam" id="PF03091">
    <property type="entry name" value="CutA1"/>
    <property type="match status" value="1"/>
</dbReference>
<dbReference type="SUPFAM" id="SSF54913">
    <property type="entry name" value="GlnB-like"/>
    <property type="match status" value="1"/>
</dbReference>
<organism>
    <name type="scientific">Salmonella dublin (strain CT_02021853)</name>
    <dbReference type="NCBI Taxonomy" id="439851"/>
    <lineage>
        <taxon>Bacteria</taxon>
        <taxon>Pseudomonadati</taxon>
        <taxon>Pseudomonadota</taxon>
        <taxon>Gammaproteobacteria</taxon>
        <taxon>Enterobacterales</taxon>
        <taxon>Enterobacteriaceae</taxon>
        <taxon>Salmonella</taxon>
    </lineage>
</organism>
<sequence length="115" mass="12681">MLDVKSQDISIPEAVVVLCTAPDEATAQDLAAKVLAEKLAACATLLPGATSLYYWEGKLEQEYEVQMILKTTVSHQQALIDCLKSHHPYQTPELLVLPVTHGDTDYLSWLNASLR</sequence>
<protein>
    <recommendedName>
        <fullName evidence="1">Divalent-cation tolerance protein CutA</fullName>
    </recommendedName>
</protein>